<protein>
    <recommendedName>
        <fullName evidence="1">Probable transcriptional regulatory protein YPA_1437</fullName>
    </recommendedName>
</protein>
<feature type="chain" id="PRO_0000257160" description="Probable transcriptional regulatory protein YPA_1437">
    <location>
        <begin position="1"/>
        <end position="247"/>
    </location>
</feature>
<accession>Q1C818</accession>
<gene>
    <name type="ordered locus">YPA_1437</name>
</gene>
<sequence>MAGHSKWANTKHRKAAQDAKRGKIFTKIIRELVTAARLGGGDPGANPRLRAAIDKALSNNMTRDTLNRAIARGVGGDEDNNMETIIYEGYGPGGTAVMVECLSDNRNRTVSEVRHAFTKTGGNLGTDGSVSYLFTKKGVISYAPGLEEDTVMDAALEAGADDIVVYDDGAIDVFTAWESLGAVKDALDATGLVAEGAEVSLIPSTKAELDAETAPKLLRLIDMLEDSDDVQEVYHNGEISDEVAATL</sequence>
<dbReference type="EMBL" id="CP000308">
    <property type="protein sequence ID" value="ABG13404.1"/>
    <property type="molecule type" value="Genomic_DNA"/>
</dbReference>
<dbReference type="RefSeq" id="WP_002211202.1">
    <property type="nucleotide sequence ID" value="NZ_CP009906.1"/>
</dbReference>
<dbReference type="SMR" id="Q1C818"/>
<dbReference type="KEGG" id="ypa:YPA_1437"/>
<dbReference type="Proteomes" id="UP000001971">
    <property type="component" value="Chromosome"/>
</dbReference>
<dbReference type="GO" id="GO:0005829">
    <property type="term" value="C:cytosol"/>
    <property type="evidence" value="ECO:0007669"/>
    <property type="project" value="TreeGrafter"/>
</dbReference>
<dbReference type="GO" id="GO:0003677">
    <property type="term" value="F:DNA binding"/>
    <property type="evidence" value="ECO:0007669"/>
    <property type="project" value="UniProtKB-UniRule"/>
</dbReference>
<dbReference type="GO" id="GO:0006355">
    <property type="term" value="P:regulation of DNA-templated transcription"/>
    <property type="evidence" value="ECO:0007669"/>
    <property type="project" value="UniProtKB-UniRule"/>
</dbReference>
<dbReference type="FunFam" id="1.10.10.200:FF:000001">
    <property type="entry name" value="Probable transcriptional regulatory protein YebC"/>
    <property type="match status" value="1"/>
</dbReference>
<dbReference type="FunFam" id="3.30.70.980:FF:000002">
    <property type="entry name" value="Probable transcriptional regulatory protein YebC"/>
    <property type="match status" value="1"/>
</dbReference>
<dbReference type="Gene3D" id="1.10.10.200">
    <property type="match status" value="1"/>
</dbReference>
<dbReference type="Gene3D" id="3.30.70.980">
    <property type="match status" value="2"/>
</dbReference>
<dbReference type="HAMAP" id="MF_00693">
    <property type="entry name" value="Transcrip_reg_TACO1"/>
    <property type="match status" value="1"/>
</dbReference>
<dbReference type="InterPro" id="IPR017856">
    <property type="entry name" value="Integrase-like_N"/>
</dbReference>
<dbReference type="InterPro" id="IPR048300">
    <property type="entry name" value="TACO1_YebC-like_2nd/3rd_dom"/>
</dbReference>
<dbReference type="InterPro" id="IPR049083">
    <property type="entry name" value="TACO1_YebC_N"/>
</dbReference>
<dbReference type="InterPro" id="IPR002876">
    <property type="entry name" value="Transcrip_reg_TACO1-like"/>
</dbReference>
<dbReference type="InterPro" id="IPR026564">
    <property type="entry name" value="Transcrip_reg_TACO1-like_dom3"/>
</dbReference>
<dbReference type="InterPro" id="IPR029072">
    <property type="entry name" value="YebC-like"/>
</dbReference>
<dbReference type="NCBIfam" id="NF001030">
    <property type="entry name" value="PRK00110.1"/>
    <property type="match status" value="1"/>
</dbReference>
<dbReference type="NCBIfam" id="NF009044">
    <property type="entry name" value="PRK12378.1"/>
    <property type="match status" value="1"/>
</dbReference>
<dbReference type="NCBIfam" id="TIGR01033">
    <property type="entry name" value="YebC/PmpR family DNA-binding transcriptional regulator"/>
    <property type="match status" value="1"/>
</dbReference>
<dbReference type="PANTHER" id="PTHR12532:SF6">
    <property type="entry name" value="TRANSCRIPTIONAL REGULATORY PROTEIN YEBC-RELATED"/>
    <property type="match status" value="1"/>
</dbReference>
<dbReference type="PANTHER" id="PTHR12532">
    <property type="entry name" value="TRANSLATIONAL ACTIVATOR OF CYTOCHROME C OXIDASE 1"/>
    <property type="match status" value="1"/>
</dbReference>
<dbReference type="Pfam" id="PF20772">
    <property type="entry name" value="TACO1_YebC_N"/>
    <property type="match status" value="1"/>
</dbReference>
<dbReference type="Pfam" id="PF01709">
    <property type="entry name" value="Transcrip_reg"/>
    <property type="match status" value="1"/>
</dbReference>
<dbReference type="SUPFAM" id="SSF75625">
    <property type="entry name" value="YebC-like"/>
    <property type="match status" value="1"/>
</dbReference>
<proteinExistence type="inferred from homology"/>
<reference key="1">
    <citation type="journal article" date="2006" name="J. Bacteriol.">
        <title>Complete genome sequence of Yersinia pestis strains Antiqua and Nepal516: evidence of gene reduction in an emerging pathogen.</title>
        <authorList>
            <person name="Chain P.S.G."/>
            <person name="Hu P."/>
            <person name="Malfatti S.A."/>
            <person name="Radnedge L."/>
            <person name="Larimer F."/>
            <person name="Vergez L.M."/>
            <person name="Worsham P."/>
            <person name="Chu M.C."/>
            <person name="Andersen G.L."/>
        </authorList>
    </citation>
    <scope>NUCLEOTIDE SEQUENCE [LARGE SCALE GENOMIC DNA]</scope>
    <source>
        <strain>Antiqua</strain>
    </source>
</reference>
<organism>
    <name type="scientific">Yersinia pestis bv. Antiqua (strain Antiqua)</name>
    <dbReference type="NCBI Taxonomy" id="360102"/>
    <lineage>
        <taxon>Bacteria</taxon>
        <taxon>Pseudomonadati</taxon>
        <taxon>Pseudomonadota</taxon>
        <taxon>Gammaproteobacteria</taxon>
        <taxon>Enterobacterales</taxon>
        <taxon>Yersiniaceae</taxon>
        <taxon>Yersinia</taxon>
    </lineage>
</organism>
<evidence type="ECO:0000255" key="1">
    <source>
        <dbReference type="HAMAP-Rule" id="MF_00693"/>
    </source>
</evidence>
<keyword id="KW-0963">Cytoplasm</keyword>
<keyword id="KW-0238">DNA-binding</keyword>
<keyword id="KW-0804">Transcription</keyword>
<keyword id="KW-0805">Transcription regulation</keyword>
<comment type="subcellular location">
    <subcellularLocation>
        <location evidence="1">Cytoplasm</location>
    </subcellularLocation>
</comment>
<comment type="similarity">
    <text evidence="1">Belongs to the TACO1 family.</text>
</comment>
<name>Y1437_YERPA</name>